<organism>
    <name type="scientific">Homo sapiens</name>
    <name type="common">Human</name>
    <dbReference type="NCBI Taxonomy" id="9606"/>
    <lineage>
        <taxon>Eukaryota</taxon>
        <taxon>Metazoa</taxon>
        <taxon>Chordata</taxon>
        <taxon>Craniata</taxon>
        <taxon>Vertebrata</taxon>
        <taxon>Euteleostomi</taxon>
        <taxon>Mammalia</taxon>
        <taxon>Eutheria</taxon>
        <taxon>Euarchontoglires</taxon>
        <taxon>Primates</taxon>
        <taxon>Haplorrhini</taxon>
        <taxon>Catarrhini</taxon>
        <taxon>Hominidae</taxon>
        <taxon>Homo</taxon>
    </lineage>
</organism>
<comment type="function">
    <text evidence="3">Odorant receptor.</text>
</comment>
<comment type="subcellular location">
    <subcellularLocation>
        <location>Cell membrane</location>
        <topology>Multi-pass membrane protein</topology>
    </subcellularLocation>
</comment>
<comment type="similarity">
    <text evidence="2">Belongs to the G-protein coupled receptor 1 family.</text>
</comment>
<comment type="online information" name="Human Olfactory Receptor Data Exploratorium (HORDE)">
    <link uri="http://genome.weizmann.ac.il/horde/card/index/symbol:OR2AE1"/>
</comment>
<evidence type="ECO:0000255" key="1"/>
<evidence type="ECO:0000255" key="2">
    <source>
        <dbReference type="PROSITE-ProRule" id="PRU00521"/>
    </source>
</evidence>
<evidence type="ECO:0000305" key="3"/>
<reference key="1">
    <citation type="submission" date="2001-07" db="EMBL/GenBank/DDBJ databases">
        <title>Genome-wide discovery and analysis of human seven transmembrane helix receptor genes.</title>
        <authorList>
            <person name="Suwa M."/>
            <person name="Sato T."/>
            <person name="Okouchi I."/>
            <person name="Arita M."/>
            <person name="Futami K."/>
            <person name="Matsumoto S."/>
            <person name="Tsutsumi S."/>
            <person name="Aburatani H."/>
            <person name="Asai K."/>
            <person name="Akiyama Y."/>
        </authorList>
    </citation>
    <scope>NUCLEOTIDE SEQUENCE [GENOMIC DNA]</scope>
</reference>
<reference key="2">
    <citation type="journal article" date="2004" name="Genome Res.">
        <title>The status, quality, and expansion of the NIH full-length cDNA project: the Mammalian Gene Collection (MGC).</title>
        <authorList>
            <consortium name="The MGC Project Team"/>
        </authorList>
    </citation>
    <scope>NUCLEOTIDE SEQUENCE [LARGE SCALE MRNA]</scope>
</reference>
<accession>Q8NHA4</accession>
<accession>B2RPD2</accession>
<proteinExistence type="evidence at transcript level"/>
<gene>
    <name type="primary">OR2AE1</name>
    <name type="synonym">OR2AE2</name>
</gene>
<protein>
    <recommendedName>
        <fullName>Olfactory receptor 2AE1</fullName>
    </recommendedName>
    <alternativeName>
        <fullName>Olfactory receptor 2AE2</fullName>
    </alternativeName>
</protein>
<feature type="chain" id="PRO_0000150471" description="Olfactory receptor 2AE1">
    <location>
        <begin position="1"/>
        <end position="323"/>
    </location>
</feature>
<feature type="topological domain" description="Extracellular" evidence="1">
    <location>
        <begin position="1"/>
        <end position="25"/>
    </location>
</feature>
<feature type="transmembrane region" description="Helical; Name=1" evidence="1">
    <location>
        <begin position="26"/>
        <end position="49"/>
    </location>
</feature>
<feature type="topological domain" description="Cytoplasmic" evidence="1">
    <location>
        <begin position="50"/>
        <end position="57"/>
    </location>
</feature>
<feature type="transmembrane region" description="Helical; Name=2" evidence="1">
    <location>
        <begin position="58"/>
        <end position="79"/>
    </location>
</feature>
<feature type="topological domain" description="Extracellular" evidence="1">
    <location>
        <begin position="80"/>
        <end position="100"/>
    </location>
</feature>
<feature type="transmembrane region" description="Helical; Name=3" evidence="1">
    <location>
        <begin position="101"/>
        <end position="120"/>
    </location>
</feature>
<feature type="topological domain" description="Cytoplasmic" evidence="1">
    <location>
        <begin position="121"/>
        <end position="139"/>
    </location>
</feature>
<feature type="transmembrane region" description="Helical; Name=4" evidence="1">
    <location>
        <begin position="140"/>
        <end position="158"/>
    </location>
</feature>
<feature type="topological domain" description="Extracellular" evidence="1">
    <location>
        <begin position="159"/>
        <end position="195"/>
    </location>
</feature>
<feature type="transmembrane region" description="Helical; Name=5" evidence="1">
    <location>
        <begin position="196"/>
        <end position="218"/>
    </location>
</feature>
<feature type="topological domain" description="Cytoplasmic" evidence="1">
    <location>
        <begin position="219"/>
        <end position="235"/>
    </location>
</feature>
<feature type="transmembrane region" description="Helical; Name=6" evidence="1">
    <location>
        <begin position="236"/>
        <end position="258"/>
    </location>
</feature>
<feature type="topological domain" description="Extracellular" evidence="1">
    <location>
        <begin position="259"/>
        <end position="271"/>
    </location>
</feature>
<feature type="transmembrane region" description="Helical; Name=7" evidence="1">
    <location>
        <begin position="272"/>
        <end position="291"/>
    </location>
</feature>
<feature type="topological domain" description="Cytoplasmic" evidence="1">
    <location>
        <begin position="292"/>
        <end position="323"/>
    </location>
</feature>
<feature type="glycosylation site" description="N-linked (GlcNAc...) asparagine" evidence="1">
    <location>
        <position position="5"/>
    </location>
</feature>
<feature type="disulfide bond" evidence="2">
    <location>
        <begin position="97"/>
        <end position="189"/>
    </location>
</feature>
<feature type="sequence variant" id="VAR_053138" description="In dbSNP:rs2572023.">
    <original>I</original>
    <variation>T</variation>
    <location>
        <position position="77"/>
    </location>
</feature>
<feature type="sequence variant" id="VAR_062019" description="In dbSNP:rs60737583.">
    <original>Y</original>
    <variation>C</variation>
    <location>
        <position position="217"/>
    </location>
</feature>
<feature type="sequence variant" id="VAR_053139" description="In dbSNP:rs17161997.">
    <original>L</original>
    <variation>V</variation>
    <location>
        <position position="267"/>
    </location>
</feature>
<sequence length="323" mass="36588">MWQKNQTSLADFILEGLFDDSLTHLFLFSLTMVVFLIAVSGNTLTILLICIDPQLHTPMYFLLSQLSLMDLMHVSTIILKMATNYLSGKKSISFVGCATQHFLYLCLGGAECFLLAVMSYDRYVAICHPLRYAVLMNKKVGLMMAVMSWLGASVNSLIHMAILMHFPFCGPRKVYHFYCEFPAVVKLVCGDITVYETTVYISSILLLLPIFLISTSYVFILQSVIQMRSSGSKRNAFATCGSHLTVVSLWFGACIFSYMRPRSQCTLLQNKVGSVFYSIITPTLNSLIYTLRNKDVAKALRRVLRRDVITQCIQRLQLWLPRV</sequence>
<keyword id="KW-1003">Cell membrane</keyword>
<keyword id="KW-1015">Disulfide bond</keyword>
<keyword id="KW-0297">G-protein coupled receptor</keyword>
<keyword id="KW-0325">Glycoprotein</keyword>
<keyword id="KW-0472">Membrane</keyword>
<keyword id="KW-0552">Olfaction</keyword>
<keyword id="KW-0675">Receptor</keyword>
<keyword id="KW-1185">Reference proteome</keyword>
<keyword id="KW-0716">Sensory transduction</keyword>
<keyword id="KW-0807">Transducer</keyword>
<keyword id="KW-0812">Transmembrane</keyword>
<keyword id="KW-1133">Transmembrane helix</keyword>
<name>O2AE1_HUMAN</name>
<dbReference type="EMBL" id="AB065478">
    <property type="protein sequence ID" value="BAC05732.1"/>
    <property type="molecule type" value="Genomic_DNA"/>
</dbReference>
<dbReference type="EMBL" id="BC137375">
    <property type="protein sequence ID" value="AAI37376.1"/>
    <property type="molecule type" value="mRNA"/>
</dbReference>
<dbReference type="EMBL" id="BC137376">
    <property type="protein sequence ID" value="AAI37377.1"/>
    <property type="molecule type" value="mRNA"/>
</dbReference>
<dbReference type="CCDS" id="CCDS34696.1"/>
<dbReference type="RefSeq" id="NP_001005276.1">
    <property type="nucleotide sequence ID" value="NM_001005276.1"/>
</dbReference>
<dbReference type="SMR" id="Q8NHA4"/>
<dbReference type="BioGRID" id="123471">
    <property type="interactions" value="2"/>
</dbReference>
<dbReference type="FunCoup" id="Q8NHA4">
    <property type="interactions" value="444"/>
</dbReference>
<dbReference type="IntAct" id="Q8NHA4">
    <property type="interactions" value="1"/>
</dbReference>
<dbReference type="STRING" id="9606.ENSP00000313936"/>
<dbReference type="GlyCosmos" id="Q8NHA4">
    <property type="glycosylation" value="1 site, No reported glycans"/>
</dbReference>
<dbReference type="GlyGen" id="Q8NHA4">
    <property type="glycosylation" value="1 site"/>
</dbReference>
<dbReference type="BioMuta" id="OR2AE1"/>
<dbReference type="DMDM" id="38372832"/>
<dbReference type="MassIVE" id="Q8NHA4"/>
<dbReference type="PaxDb" id="9606-ENSP00000313936"/>
<dbReference type="PeptideAtlas" id="Q8NHA4"/>
<dbReference type="Antibodypedia" id="49775">
    <property type="antibodies" value="34 antibodies from 17 providers"/>
</dbReference>
<dbReference type="DNASU" id="81392"/>
<dbReference type="Ensembl" id="ENST00000316368.3">
    <property type="protein sequence ID" value="ENSP00000313936.2"/>
    <property type="gene ID" value="ENSG00000244623.2"/>
</dbReference>
<dbReference type="GeneID" id="81392"/>
<dbReference type="KEGG" id="hsa:81392"/>
<dbReference type="MANE-Select" id="ENST00000316368.3">
    <property type="protein sequence ID" value="ENSP00000313936.2"/>
    <property type="RefSeq nucleotide sequence ID" value="NM_001005276.1"/>
    <property type="RefSeq protein sequence ID" value="NP_001005276.1"/>
</dbReference>
<dbReference type="UCSC" id="uc003usc.2">
    <property type="organism name" value="human"/>
</dbReference>
<dbReference type="AGR" id="HGNC:15087"/>
<dbReference type="CTD" id="81392"/>
<dbReference type="GeneCards" id="OR2AE1"/>
<dbReference type="HGNC" id="HGNC:15087">
    <property type="gene designation" value="OR2AE1"/>
</dbReference>
<dbReference type="HPA" id="ENSG00000244623">
    <property type="expression patterns" value="Not detected"/>
</dbReference>
<dbReference type="neXtProt" id="NX_Q8NHA4"/>
<dbReference type="PharmGKB" id="PA32123"/>
<dbReference type="VEuPathDB" id="HostDB:ENSG00000244623"/>
<dbReference type="eggNOG" id="ENOG502T9MF">
    <property type="taxonomic scope" value="Eukaryota"/>
</dbReference>
<dbReference type="GeneTree" id="ENSGT01130000278260"/>
<dbReference type="HOGENOM" id="CLU_012526_0_1_1"/>
<dbReference type="InParanoid" id="Q8NHA4"/>
<dbReference type="OMA" id="VYHFYCE"/>
<dbReference type="OrthoDB" id="9625398at2759"/>
<dbReference type="PAN-GO" id="Q8NHA4">
    <property type="GO annotations" value="0 GO annotations based on evolutionary models"/>
</dbReference>
<dbReference type="PhylomeDB" id="Q8NHA4"/>
<dbReference type="TreeFam" id="TF337295"/>
<dbReference type="PathwayCommons" id="Q8NHA4"/>
<dbReference type="Reactome" id="R-HSA-9752946">
    <property type="pathway name" value="Expression and translocation of olfactory receptors"/>
</dbReference>
<dbReference type="BioGRID-ORCS" id="81392">
    <property type="hits" value="11 hits in 743 CRISPR screens"/>
</dbReference>
<dbReference type="GeneWiki" id="OR2AE1"/>
<dbReference type="GenomeRNAi" id="81392"/>
<dbReference type="Pharos" id="Q8NHA4">
    <property type="development level" value="Tdark"/>
</dbReference>
<dbReference type="PRO" id="PR:Q8NHA4"/>
<dbReference type="Proteomes" id="UP000005640">
    <property type="component" value="Chromosome 7"/>
</dbReference>
<dbReference type="RNAct" id="Q8NHA4">
    <property type="molecule type" value="protein"/>
</dbReference>
<dbReference type="Bgee" id="ENSG00000244623">
    <property type="expression patterns" value="Expressed in right coronary artery and 28 other cell types or tissues"/>
</dbReference>
<dbReference type="GO" id="GO:0005886">
    <property type="term" value="C:plasma membrane"/>
    <property type="evidence" value="ECO:0000318"/>
    <property type="project" value="GO_Central"/>
</dbReference>
<dbReference type="GO" id="GO:0004930">
    <property type="term" value="F:G protein-coupled receptor activity"/>
    <property type="evidence" value="ECO:0007669"/>
    <property type="project" value="UniProtKB-KW"/>
</dbReference>
<dbReference type="GO" id="GO:0004984">
    <property type="term" value="F:olfactory receptor activity"/>
    <property type="evidence" value="ECO:0000318"/>
    <property type="project" value="GO_Central"/>
</dbReference>
<dbReference type="GO" id="GO:0050911">
    <property type="term" value="P:detection of chemical stimulus involved in sensory perception of smell"/>
    <property type="evidence" value="ECO:0000318"/>
    <property type="project" value="GO_Central"/>
</dbReference>
<dbReference type="CDD" id="cd15421">
    <property type="entry name" value="7tmA_OR2T-like"/>
    <property type="match status" value="1"/>
</dbReference>
<dbReference type="FunFam" id="1.20.1070.10:FF:000008">
    <property type="entry name" value="Olfactory receptor"/>
    <property type="match status" value="1"/>
</dbReference>
<dbReference type="Gene3D" id="1.20.1070.10">
    <property type="entry name" value="Rhodopsin 7-helix transmembrane proteins"/>
    <property type="match status" value="1"/>
</dbReference>
<dbReference type="InterPro" id="IPR000276">
    <property type="entry name" value="GPCR_Rhodpsn"/>
</dbReference>
<dbReference type="InterPro" id="IPR017452">
    <property type="entry name" value="GPCR_Rhodpsn_7TM"/>
</dbReference>
<dbReference type="InterPro" id="IPR000725">
    <property type="entry name" value="Olfact_rcpt"/>
</dbReference>
<dbReference type="PANTHER" id="PTHR26453">
    <property type="entry name" value="OLFACTORY RECEPTOR"/>
    <property type="match status" value="1"/>
</dbReference>
<dbReference type="Pfam" id="PF13853">
    <property type="entry name" value="7tm_4"/>
    <property type="match status" value="1"/>
</dbReference>
<dbReference type="PRINTS" id="PR00237">
    <property type="entry name" value="GPCRRHODOPSN"/>
</dbReference>
<dbReference type="PRINTS" id="PR00245">
    <property type="entry name" value="OLFACTORYR"/>
</dbReference>
<dbReference type="SUPFAM" id="SSF81321">
    <property type="entry name" value="Family A G protein-coupled receptor-like"/>
    <property type="match status" value="1"/>
</dbReference>
<dbReference type="PROSITE" id="PS00237">
    <property type="entry name" value="G_PROTEIN_RECEP_F1_1"/>
    <property type="match status" value="1"/>
</dbReference>
<dbReference type="PROSITE" id="PS50262">
    <property type="entry name" value="G_PROTEIN_RECEP_F1_2"/>
    <property type="match status" value="1"/>
</dbReference>